<sequence>MIQRAEAVLSVLGELQEATECVGLDALTKVAVEVEQVLAPFPLPTAPCSEISSWQGIDAVAHRLYPGDAPTGLLPLVCKGEGNLLFDAASMLLVGSTSLSLELQVRAVVEMLIWKRYYLCGMIDSKVMLQAARFSLCAEESQDMLNLPIQVLEAIFDADVKASCFHGSFANMWHVYALASVLQCNIYSVYPMYNLKIRPYFNRLIRPRIWSKDTEPLTLHIMWSGDLEAGSVFKPHKFVALIHASDLKIGSPNSEQRMPLVKSLELQNQDTQLSYSNLKNKFNITKSTFYRWKRQSIEYHKKSVARYEAKHFFLTSYKQGKLIPLSQFKELFPEIPRSTYYAWKQELVSCCSLSGGSTGELSPGDSTEQDYWSSPEVKKTPGQGSFANMLAFKYEKLEGERNQNVTLMQEAKKSLQDCIVANTSFPYRIFKRKFPGISRSTYYNWRREAMLFIPFKEHSGSSEEGSDADKSQSPRSQMSPSKFDRQKLSPRVRISRRKHRSLRLAYHHRKMLREEAKMHIRRSKMSFIKFKLKFPTVSSSFYWLWRVSLNRKPEKPAVMSNSEESKSLAISPDVFQKIKTQGMFSFDGNIDCLNGQTEFTMPEYSPPDQSTNDHMFVMDVVALANFKAKAKLFLQQRFEEKAFPTFKEFRSYFPLTPRSTYYMWKRALHHGVPLIHA</sequence>
<feature type="chain" id="PRO_0000360410" description="Vertnin">
    <location>
        <begin position="1"/>
        <end position="677"/>
    </location>
</feature>
<feature type="region of interest" description="Disordered" evidence="1">
    <location>
        <begin position="356"/>
        <end position="376"/>
    </location>
</feature>
<feature type="region of interest" description="Disordered" evidence="1">
    <location>
        <begin position="458"/>
        <end position="490"/>
    </location>
</feature>
<feature type="compositionally biased region" description="Basic and acidic residues" evidence="1">
    <location>
        <begin position="458"/>
        <end position="472"/>
    </location>
</feature>
<feature type="sequence conflict" description="In Ref. 1; CAN88290." evidence="3" ref="1">
    <original>V</original>
    <variation>A</variation>
    <location>
        <position position="37"/>
    </location>
</feature>
<feature type="sequence conflict" description="In Ref. 1; CAN88290/CAQ15258." evidence="3" ref="1">
    <original>A</original>
    <variation>T</variation>
    <location>
        <position position="107"/>
    </location>
</feature>
<feature type="sequence conflict" description="In Ref. 1; CAN88290." evidence="3" ref="1">
    <original>I</original>
    <variation>V</variation>
    <location>
        <position position="570"/>
    </location>
</feature>
<feature type="sequence conflict" description="In Ref. 1; CAN88290." evidence="3" ref="1">
    <original>P</original>
    <variation>R</variation>
    <location>
        <position position="606"/>
    </location>
</feature>
<keyword id="KW-0217">Developmental protein</keyword>
<keyword id="KW-0238">DNA-binding</keyword>
<keyword id="KW-0539">Nucleus</keyword>
<keyword id="KW-1185">Reference proteome</keyword>
<keyword id="KW-0804">Transcription</keyword>
<keyword id="KW-0805">Transcription regulation</keyword>
<name>VRTN_DANRE</name>
<gene>
    <name type="primary">vrtn</name>
    <name type="ORF">si:ch211-146n9.1</name>
    <name type="ORF">si:dkey-1h6.4</name>
    <name type="ORF">zgc:153349</name>
</gene>
<evidence type="ECO:0000256" key="1">
    <source>
        <dbReference type="SAM" id="MobiDB-lite"/>
    </source>
</evidence>
<evidence type="ECO:0000269" key="2">
    <source>
    </source>
</evidence>
<evidence type="ECO:0000305" key="3"/>
<reference key="1">
    <citation type="journal article" date="2013" name="Nature">
        <title>The zebrafish reference genome sequence and its relationship to the human genome.</title>
        <authorList>
            <person name="Howe K."/>
            <person name="Clark M.D."/>
            <person name="Torroja C.F."/>
            <person name="Torrance J."/>
            <person name="Berthelot C."/>
            <person name="Muffato M."/>
            <person name="Collins J.E."/>
            <person name="Humphray S."/>
            <person name="McLaren K."/>
            <person name="Matthews L."/>
            <person name="McLaren S."/>
            <person name="Sealy I."/>
            <person name="Caccamo M."/>
            <person name="Churcher C."/>
            <person name="Scott C."/>
            <person name="Barrett J.C."/>
            <person name="Koch R."/>
            <person name="Rauch G.J."/>
            <person name="White S."/>
            <person name="Chow W."/>
            <person name="Kilian B."/>
            <person name="Quintais L.T."/>
            <person name="Guerra-Assuncao J.A."/>
            <person name="Zhou Y."/>
            <person name="Gu Y."/>
            <person name="Yen J."/>
            <person name="Vogel J.H."/>
            <person name="Eyre T."/>
            <person name="Redmond S."/>
            <person name="Banerjee R."/>
            <person name="Chi J."/>
            <person name="Fu B."/>
            <person name="Langley E."/>
            <person name="Maguire S.F."/>
            <person name="Laird G.K."/>
            <person name="Lloyd D."/>
            <person name="Kenyon E."/>
            <person name="Donaldson S."/>
            <person name="Sehra H."/>
            <person name="Almeida-King J."/>
            <person name="Loveland J."/>
            <person name="Trevanion S."/>
            <person name="Jones M."/>
            <person name="Quail M."/>
            <person name="Willey D."/>
            <person name="Hunt A."/>
            <person name="Burton J."/>
            <person name="Sims S."/>
            <person name="McLay K."/>
            <person name="Plumb B."/>
            <person name="Davis J."/>
            <person name="Clee C."/>
            <person name="Oliver K."/>
            <person name="Clark R."/>
            <person name="Riddle C."/>
            <person name="Elliot D."/>
            <person name="Threadgold G."/>
            <person name="Harden G."/>
            <person name="Ware D."/>
            <person name="Begum S."/>
            <person name="Mortimore B."/>
            <person name="Kerry G."/>
            <person name="Heath P."/>
            <person name="Phillimore B."/>
            <person name="Tracey A."/>
            <person name="Corby N."/>
            <person name="Dunn M."/>
            <person name="Johnson C."/>
            <person name="Wood J."/>
            <person name="Clark S."/>
            <person name="Pelan S."/>
            <person name="Griffiths G."/>
            <person name="Smith M."/>
            <person name="Glithero R."/>
            <person name="Howden P."/>
            <person name="Barker N."/>
            <person name="Lloyd C."/>
            <person name="Stevens C."/>
            <person name="Harley J."/>
            <person name="Holt K."/>
            <person name="Panagiotidis G."/>
            <person name="Lovell J."/>
            <person name="Beasley H."/>
            <person name="Henderson C."/>
            <person name="Gordon D."/>
            <person name="Auger K."/>
            <person name="Wright D."/>
            <person name="Collins J."/>
            <person name="Raisen C."/>
            <person name="Dyer L."/>
            <person name="Leung K."/>
            <person name="Robertson L."/>
            <person name="Ambridge K."/>
            <person name="Leongamornlert D."/>
            <person name="McGuire S."/>
            <person name="Gilderthorp R."/>
            <person name="Griffiths C."/>
            <person name="Manthravadi D."/>
            <person name="Nichol S."/>
            <person name="Barker G."/>
            <person name="Whitehead S."/>
            <person name="Kay M."/>
            <person name="Brown J."/>
            <person name="Murnane C."/>
            <person name="Gray E."/>
            <person name="Humphries M."/>
            <person name="Sycamore N."/>
            <person name="Barker D."/>
            <person name="Saunders D."/>
            <person name="Wallis J."/>
            <person name="Babbage A."/>
            <person name="Hammond S."/>
            <person name="Mashreghi-Mohammadi M."/>
            <person name="Barr L."/>
            <person name="Martin S."/>
            <person name="Wray P."/>
            <person name="Ellington A."/>
            <person name="Matthews N."/>
            <person name="Ellwood M."/>
            <person name="Woodmansey R."/>
            <person name="Clark G."/>
            <person name="Cooper J."/>
            <person name="Tromans A."/>
            <person name="Grafham D."/>
            <person name="Skuce C."/>
            <person name="Pandian R."/>
            <person name="Andrews R."/>
            <person name="Harrison E."/>
            <person name="Kimberley A."/>
            <person name="Garnett J."/>
            <person name="Fosker N."/>
            <person name="Hall R."/>
            <person name="Garner P."/>
            <person name="Kelly D."/>
            <person name="Bird C."/>
            <person name="Palmer S."/>
            <person name="Gehring I."/>
            <person name="Berger A."/>
            <person name="Dooley C.M."/>
            <person name="Ersan-Urun Z."/>
            <person name="Eser C."/>
            <person name="Geiger H."/>
            <person name="Geisler M."/>
            <person name="Karotki L."/>
            <person name="Kirn A."/>
            <person name="Konantz J."/>
            <person name="Konantz M."/>
            <person name="Oberlander M."/>
            <person name="Rudolph-Geiger S."/>
            <person name="Teucke M."/>
            <person name="Lanz C."/>
            <person name="Raddatz G."/>
            <person name="Osoegawa K."/>
            <person name="Zhu B."/>
            <person name="Rapp A."/>
            <person name="Widaa S."/>
            <person name="Langford C."/>
            <person name="Yang F."/>
            <person name="Schuster S.C."/>
            <person name="Carter N.P."/>
            <person name="Harrow J."/>
            <person name="Ning Z."/>
            <person name="Herrero J."/>
            <person name="Searle S.M."/>
            <person name="Enright A."/>
            <person name="Geisler R."/>
            <person name="Plasterk R.H."/>
            <person name="Lee C."/>
            <person name="Westerfield M."/>
            <person name="de Jong P.J."/>
            <person name="Zon L.I."/>
            <person name="Postlethwait J.H."/>
            <person name="Nusslein-Volhard C."/>
            <person name="Hubbard T.J."/>
            <person name="Roest Crollius H."/>
            <person name="Rogers J."/>
            <person name="Stemple D.L."/>
        </authorList>
    </citation>
    <scope>NUCLEOTIDE SEQUENCE [LARGE SCALE GENOMIC DNA]</scope>
    <source>
        <strain>Tuebingen</strain>
    </source>
</reference>
<reference key="2">
    <citation type="submission" date="2006-09" db="EMBL/GenBank/DDBJ databases">
        <authorList>
            <consortium name="NIH - Zebrafish Gene Collection (ZGC) project"/>
        </authorList>
    </citation>
    <scope>NUCLEOTIDE SEQUENCE [LARGE SCALE MRNA]</scope>
    <source>
        <tissue>Ovary</tissue>
    </source>
</reference>
<reference key="3">
    <citation type="journal article" date="2017" name="Development">
        <title>Vegetally localised Vrtn functions as a novel repressor to modulate bmp2b transcription during dorsoventral patterning in zebrafish.</title>
        <authorList>
            <person name="Shao M."/>
            <person name="Wang M."/>
            <person name="Liu Y.Y."/>
            <person name="Ge Y.W."/>
            <person name="Zhang Y.J."/>
            <person name="Shi D.L."/>
        </authorList>
    </citation>
    <scope>SUBCELLULAR LOCATION</scope>
    <scope>FUNCTION</scope>
</reference>
<dbReference type="EMBL" id="AL928790">
    <property type="protein sequence ID" value="CAQ15258.1"/>
    <property type="molecule type" value="Genomic_DNA"/>
</dbReference>
<dbReference type="EMBL" id="BX255917">
    <property type="protein sequence ID" value="CAN88290.1"/>
    <property type="molecule type" value="Genomic_DNA"/>
</dbReference>
<dbReference type="EMBL" id="BC124324">
    <property type="protein sequence ID" value="AAI24325.1"/>
    <property type="molecule type" value="mRNA"/>
</dbReference>
<dbReference type="RefSeq" id="NP_001070608.1">
    <property type="nucleotide sequence ID" value="NM_001077140.1"/>
</dbReference>
<dbReference type="FunCoup" id="Q08C99">
    <property type="interactions" value="1962"/>
</dbReference>
<dbReference type="STRING" id="7955.ENSDARP00000083446"/>
<dbReference type="PaxDb" id="7955-ENSDARP00000083446"/>
<dbReference type="GeneID" id="555269"/>
<dbReference type="KEGG" id="dre:555269"/>
<dbReference type="AGR" id="ZFIN:ZDB-GENE-060929-700"/>
<dbReference type="CTD" id="55237"/>
<dbReference type="ZFIN" id="ZDB-GENE-060929-700">
    <property type="gene designation" value="vrtn"/>
</dbReference>
<dbReference type="eggNOG" id="ENOG502SC23">
    <property type="taxonomic scope" value="Eukaryota"/>
</dbReference>
<dbReference type="InParanoid" id="Q08C99"/>
<dbReference type="OrthoDB" id="9869831at2759"/>
<dbReference type="PhylomeDB" id="Q08C99"/>
<dbReference type="TreeFam" id="TF332015"/>
<dbReference type="PRO" id="PR:Q08C99"/>
<dbReference type="Proteomes" id="UP000000437">
    <property type="component" value="Alternate scaffold 20"/>
</dbReference>
<dbReference type="Proteomes" id="UP000000437">
    <property type="component" value="Chromosome 20"/>
</dbReference>
<dbReference type="GO" id="GO:0000785">
    <property type="term" value="C:chromatin"/>
    <property type="evidence" value="ECO:0000314"/>
    <property type="project" value="ZFIN"/>
</dbReference>
<dbReference type="GO" id="GO:0005634">
    <property type="term" value="C:nucleus"/>
    <property type="evidence" value="ECO:0007669"/>
    <property type="project" value="UniProtKB-SubCell"/>
</dbReference>
<dbReference type="GO" id="GO:0003677">
    <property type="term" value="F:DNA binding"/>
    <property type="evidence" value="ECO:0007669"/>
    <property type="project" value="UniProtKB-KW"/>
</dbReference>
<dbReference type="GO" id="GO:0001227">
    <property type="term" value="F:DNA-binding transcription repressor activity, RNA polymerase II-specific"/>
    <property type="evidence" value="ECO:0000314"/>
    <property type="project" value="ZFIN"/>
</dbReference>
<dbReference type="GO" id="GO:0000122">
    <property type="term" value="P:negative regulation of transcription by RNA polymerase II"/>
    <property type="evidence" value="ECO:0000314"/>
    <property type="project" value="ZFIN"/>
</dbReference>
<dbReference type="GO" id="GO:0006357">
    <property type="term" value="P:regulation of transcription by RNA polymerase II"/>
    <property type="evidence" value="ECO:0000318"/>
    <property type="project" value="GO_Central"/>
</dbReference>
<dbReference type="CDD" id="cd22791">
    <property type="entry name" value="OTU_VRTN"/>
    <property type="match status" value="1"/>
</dbReference>
<dbReference type="InterPro" id="IPR038822">
    <property type="entry name" value="Vertnin-like"/>
</dbReference>
<dbReference type="InterPro" id="IPR047273">
    <property type="entry name" value="VRTN_OTU_dom"/>
</dbReference>
<dbReference type="PANTHER" id="PTHR16081">
    <property type="entry name" value="VERTNIN"/>
    <property type="match status" value="1"/>
</dbReference>
<dbReference type="PANTHER" id="PTHR16081:SF0">
    <property type="entry name" value="VERTNIN"/>
    <property type="match status" value="1"/>
</dbReference>
<protein>
    <recommendedName>
        <fullName>Vertnin</fullName>
    </recommendedName>
</protein>
<organism>
    <name type="scientific">Danio rerio</name>
    <name type="common">Zebrafish</name>
    <name type="synonym">Brachydanio rerio</name>
    <dbReference type="NCBI Taxonomy" id="7955"/>
    <lineage>
        <taxon>Eukaryota</taxon>
        <taxon>Metazoa</taxon>
        <taxon>Chordata</taxon>
        <taxon>Craniata</taxon>
        <taxon>Vertebrata</taxon>
        <taxon>Euteleostomi</taxon>
        <taxon>Actinopterygii</taxon>
        <taxon>Neopterygii</taxon>
        <taxon>Teleostei</taxon>
        <taxon>Ostariophysi</taxon>
        <taxon>Cypriniformes</taxon>
        <taxon>Danionidae</taxon>
        <taxon>Danioninae</taxon>
        <taxon>Danio</taxon>
    </lineage>
</organism>
<accession>Q08C99</accession>
<accession>A5PMA1</accession>
<accession>B0R0J2</accession>
<proteinExistence type="evidence at transcript level"/>
<comment type="function">
    <text evidence="2">Functions as a transcriptional repressor that modulates bmp2b expression during dorsoventral patterning.</text>
</comment>
<comment type="subcellular location">
    <subcellularLocation>
        <location evidence="2">Nucleus</location>
    </subcellularLocation>
</comment>
<comment type="similarity">
    <text evidence="3">Belongs to the vertnin family.</text>
</comment>